<feature type="transit peptide" description="Mitochondrion" evidence="2">
    <location>
        <begin position="1"/>
        <end position="24"/>
    </location>
</feature>
<feature type="chain" id="PRO_0000285323" description="Exonuclease V, mitochondrial">
    <location>
        <begin position="25"/>
        <end position="630"/>
    </location>
</feature>
<feature type="binding site" evidence="1">
    <location>
        <position position="150"/>
    </location>
    <ligand>
        <name>[4Fe-4S] cluster</name>
        <dbReference type="ChEBI" id="CHEBI:49883"/>
    </ligand>
</feature>
<feature type="binding site" evidence="1">
    <location>
        <position position="597"/>
    </location>
    <ligand>
        <name>[4Fe-4S] cluster</name>
        <dbReference type="ChEBI" id="CHEBI:49883"/>
    </ligand>
</feature>
<feature type="binding site" evidence="1">
    <location>
        <position position="600"/>
    </location>
    <ligand>
        <name>[4Fe-4S] cluster</name>
        <dbReference type="ChEBI" id="CHEBI:49883"/>
    </ligand>
</feature>
<feature type="binding site" evidence="1">
    <location>
        <position position="606"/>
    </location>
    <ligand>
        <name>[4Fe-4S] cluster</name>
        <dbReference type="ChEBI" id="CHEBI:49883"/>
    </ligand>
</feature>
<keyword id="KW-0004">4Fe-4S</keyword>
<keyword id="KW-0238">DNA-binding</keyword>
<keyword id="KW-0269">Exonuclease</keyword>
<keyword id="KW-0378">Hydrolase</keyword>
<keyword id="KW-0408">Iron</keyword>
<keyword id="KW-0411">Iron-sulfur</keyword>
<keyword id="KW-0460">Magnesium</keyword>
<keyword id="KW-0479">Metal-binding</keyword>
<keyword id="KW-0496">Mitochondrion</keyword>
<keyword id="KW-0540">Nuclease</keyword>
<keyword id="KW-1185">Reference proteome</keyword>
<keyword id="KW-0809">Transit peptide</keyword>
<protein>
    <recommendedName>
        <fullName>Exonuclease V, mitochondrial</fullName>
        <shortName>Exo V</shortName>
        <ecNumber>3.1.-.-</ecNumber>
    </recommendedName>
    <alternativeName>
        <fullName>Defects in morphology protein 1</fullName>
    </alternativeName>
</protein>
<accession>Q6BKP5</accession>
<accession>B5RUJ8</accession>
<organism>
    <name type="scientific">Debaryomyces hansenii (strain ATCC 36239 / CBS 767 / BCRC 21394 / JCM 1990 / NBRC 0083 / IGC 2968)</name>
    <name type="common">Yeast</name>
    <name type="synonym">Torulaspora hansenii</name>
    <dbReference type="NCBI Taxonomy" id="284592"/>
    <lineage>
        <taxon>Eukaryota</taxon>
        <taxon>Fungi</taxon>
        <taxon>Dikarya</taxon>
        <taxon>Ascomycota</taxon>
        <taxon>Saccharomycotina</taxon>
        <taxon>Pichiomycetes</taxon>
        <taxon>Debaryomycetaceae</taxon>
        <taxon>Debaryomyces</taxon>
    </lineage>
</organism>
<evidence type="ECO:0000250" key="1"/>
<evidence type="ECO:0000255" key="2"/>
<evidence type="ECO:0000305" key="3"/>
<sequence>MIRPGKVLVLNFLKRSLSNLATFKGSEINTKKYDLKLPNNSDSNKQYFTLDEKLKVIQYTDANEESIIDEFILPLSSGAKASDTYQKTNLSKMRNLLTTFHIDEGESLPLSKPGYIKETPFEYHSKYNSDTSYVSIPRLSVTKLLTFQWCELREFYTIFSGSPVKKETKEMKLGTEAHLKLELETHNLIDVEDIERITDEFVEKKIDSSKRHINTLADPDDILLAKDDLSKLTELLHGAIPESSMANEWMSKIISRLFTLINTSEAREVLVHGYLDFQTSHFTSNLHDFQLNQSNLVLVSGVVDYLKLFNPHDKTDYSMFEDIQDHVEFTYSSQRKHQWIDLSQFLKDIDPIIKEYSDTYKIAITDVKTRSWNKLPQQESVLQAAKLQVEYYRNMFGILAGEFDDIEIGYEMLLENAKRRNLDVDKPISIKSALALLKANHTIILKDYVKLANGEAIGFESFDRFSQERYLNQGSEYDFTKVLEGTNREDYISQIKASDKDGFDFDEILTSDILKAWKIPLTLRYFAARSSQLFHLCKPFLSDSLSIEYHNVKKNDQCFHTNYYNYNANEIDEVTAKASAFWNGTRPPIPVQDLSKCNYCDFSSRCVIPNPHKNVPGSYGSVGSKMKHFI</sequence>
<comment type="function">
    <text evidence="1">Single strand DNA specific 5' exonuclease involved in mitochondrial DNA replication and recombination. Releases dinucleotides as main products of catalysis. Has the capacity to slide across 5'double-stranded DNA or 5'RNA sequences and resumes cutting two nucleotides downstream of the double-stranded-to-single-stranded junction or RNA-to-DNA junction, respectively (By similarity).</text>
</comment>
<comment type="cofactor">
    <cofactor evidence="1">
        <name>Mg(2+)</name>
        <dbReference type="ChEBI" id="CHEBI:18420"/>
    </cofactor>
</comment>
<comment type="cofactor">
    <cofactor evidence="1">
        <name>[4Fe-4S] cluster</name>
        <dbReference type="ChEBI" id="CHEBI:49883"/>
    </cofactor>
    <text evidence="1">Binds 1 [4Fe-4S] cluster.</text>
</comment>
<comment type="subunit">
    <text evidence="1">Monomer.</text>
</comment>
<comment type="subcellular location">
    <subcellularLocation>
        <location>Mitochondrion</location>
    </subcellularLocation>
</comment>
<comment type="similarity">
    <text evidence="3">Belongs to the EXO5 family.</text>
</comment>
<name>EXO5_DEBHA</name>
<proteinExistence type="inferred from homology"/>
<reference key="1">
    <citation type="journal article" date="2004" name="Nature">
        <title>Genome evolution in yeasts.</title>
        <authorList>
            <person name="Dujon B."/>
            <person name="Sherman D."/>
            <person name="Fischer G."/>
            <person name="Durrens P."/>
            <person name="Casaregola S."/>
            <person name="Lafontaine I."/>
            <person name="de Montigny J."/>
            <person name="Marck C."/>
            <person name="Neuveglise C."/>
            <person name="Talla E."/>
            <person name="Goffard N."/>
            <person name="Frangeul L."/>
            <person name="Aigle M."/>
            <person name="Anthouard V."/>
            <person name="Babour A."/>
            <person name="Barbe V."/>
            <person name="Barnay S."/>
            <person name="Blanchin S."/>
            <person name="Beckerich J.-M."/>
            <person name="Beyne E."/>
            <person name="Bleykasten C."/>
            <person name="Boisrame A."/>
            <person name="Boyer J."/>
            <person name="Cattolico L."/>
            <person name="Confanioleri F."/>
            <person name="de Daruvar A."/>
            <person name="Despons L."/>
            <person name="Fabre E."/>
            <person name="Fairhead C."/>
            <person name="Ferry-Dumazet H."/>
            <person name="Groppi A."/>
            <person name="Hantraye F."/>
            <person name="Hennequin C."/>
            <person name="Jauniaux N."/>
            <person name="Joyet P."/>
            <person name="Kachouri R."/>
            <person name="Kerrest A."/>
            <person name="Koszul R."/>
            <person name="Lemaire M."/>
            <person name="Lesur I."/>
            <person name="Ma L."/>
            <person name="Muller H."/>
            <person name="Nicaud J.-M."/>
            <person name="Nikolski M."/>
            <person name="Oztas S."/>
            <person name="Ozier-Kalogeropoulos O."/>
            <person name="Pellenz S."/>
            <person name="Potier S."/>
            <person name="Richard G.-F."/>
            <person name="Straub M.-L."/>
            <person name="Suleau A."/>
            <person name="Swennen D."/>
            <person name="Tekaia F."/>
            <person name="Wesolowski-Louvel M."/>
            <person name="Westhof E."/>
            <person name="Wirth B."/>
            <person name="Zeniou-Meyer M."/>
            <person name="Zivanovic Y."/>
            <person name="Bolotin-Fukuhara M."/>
            <person name="Thierry A."/>
            <person name="Bouchier C."/>
            <person name="Caudron B."/>
            <person name="Scarpelli C."/>
            <person name="Gaillardin C."/>
            <person name="Weissenbach J."/>
            <person name="Wincker P."/>
            <person name="Souciet J.-L."/>
        </authorList>
    </citation>
    <scope>NUCLEOTIDE SEQUENCE [LARGE SCALE GENOMIC DNA]</scope>
    <source>
        <strain>ATCC 36239 / CBS 767 / BCRC 21394 / JCM 1990 / NBRC 0083 / IGC 2968</strain>
    </source>
</reference>
<gene>
    <name type="primary">EXO5</name>
    <name type="synonym">DEM1</name>
    <name type="ordered locus">DEHA2F20240g</name>
</gene>
<dbReference type="EC" id="3.1.-.-"/>
<dbReference type="EMBL" id="CR382138">
    <property type="protein sequence ID" value="CAR66376.1"/>
    <property type="molecule type" value="Genomic_DNA"/>
</dbReference>
<dbReference type="RefSeq" id="XP_002770856.1">
    <property type="nucleotide sequence ID" value="XM_002770810.1"/>
</dbReference>
<dbReference type="FunCoup" id="Q6BKP5">
    <property type="interactions" value="22"/>
</dbReference>
<dbReference type="STRING" id="284592.Q6BKP5"/>
<dbReference type="GeneID" id="8999018"/>
<dbReference type="KEGG" id="dha:DEHA2F20240g"/>
<dbReference type="VEuPathDB" id="FungiDB:DEHA2F20240g"/>
<dbReference type="eggNOG" id="ENOG502QR0P">
    <property type="taxonomic scope" value="Eukaryota"/>
</dbReference>
<dbReference type="HOGENOM" id="CLU_019985_0_0_1"/>
<dbReference type="InParanoid" id="Q6BKP5"/>
<dbReference type="OMA" id="LQVMYYR"/>
<dbReference type="OrthoDB" id="354769at2759"/>
<dbReference type="Proteomes" id="UP000000599">
    <property type="component" value="Chromosome F"/>
</dbReference>
<dbReference type="GO" id="GO:0005739">
    <property type="term" value="C:mitochondrion"/>
    <property type="evidence" value="ECO:0007669"/>
    <property type="project" value="UniProtKB-SubCell"/>
</dbReference>
<dbReference type="GO" id="GO:0005634">
    <property type="term" value="C:nucleus"/>
    <property type="evidence" value="ECO:0007669"/>
    <property type="project" value="TreeGrafter"/>
</dbReference>
<dbReference type="GO" id="GO:0051539">
    <property type="term" value="F:4 iron, 4 sulfur cluster binding"/>
    <property type="evidence" value="ECO:0007669"/>
    <property type="project" value="UniProtKB-KW"/>
</dbReference>
<dbReference type="GO" id="GO:0003677">
    <property type="term" value="F:DNA binding"/>
    <property type="evidence" value="ECO:0007669"/>
    <property type="project" value="UniProtKB-KW"/>
</dbReference>
<dbReference type="GO" id="GO:0046872">
    <property type="term" value="F:metal ion binding"/>
    <property type="evidence" value="ECO:0007669"/>
    <property type="project" value="UniProtKB-KW"/>
</dbReference>
<dbReference type="GO" id="GO:0045145">
    <property type="term" value="F:single-stranded DNA 5'-3' DNA exonuclease activity"/>
    <property type="evidence" value="ECO:0007669"/>
    <property type="project" value="InterPro"/>
</dbReference>
<dbReference type="GO" id="GO:0036297">
    <property type="term" value="P:interstrand cross-link repair"/>
    <property type="evidence" value="ECO:0007669"/>
    <property type="project" value="TreeGrafter"/>
</dbReference>
<dbReference type="GO" id="GO:0000002">
    <property type="term" value="P:mitochondrial genome maintenance"/>
    <property type="evidence" value="ECO:0007669"/>
    <property type="project" value="InterPro"/>
</dbReference>
<dbReference type="InterPro" id="IPR016610">
    <property type="entry name" value="Exo5"/>
</dbReference>
<dbReference type="InterPro" id="IPR019190">
    <property type="entry name" value="EXOV"/>
</dbReference>
<dbReference type="PANTHER" id="PTHR14464">
    <property type="entry name" value="EXONUCLEASE V"/>
    <property type="match status" value="1"/>
</dbReference>
<dbReference type="PANTHER" id="PTHR14464:SF4">
    <property type="entry name" value="EXONUCLEASE V"/>
    <property type="match status" value="1"/>
</dbReference>
<dbReference type="Pfam" id="PF09810">
    <property type="entry name" value="Exo5"/>
    <property type="match status" value="2"/>
</dbReference>
<dbReference type="PIRSF" id="PIRSF013220">
    <property type="entry name" value="UCP013220"/>
    <property type="match status" value="1"/>
</dbReference>